<accession>Q6MGU3</accession>
<name>Y3828_BDEBA</name>
<evidence type="ECO:0000250" key="1"/>
<evidence type="ECO:0000255" key="2">
    <source>
        <dbReference type="PROSITE-ProRule" id="PRU00208"/>
    </source>
</evidence>
<evidence type="ECO:0000255" key="3">
    <source>
        <dbReference type="PROSITE-ProRule" id="PRU01024"/>
    </source>
</evidence>
<gene>
    <name type="ordered locus">Bd3828</name>
</gene>
<dbReference type="EC" id="2.1.1.-"/>
<dbReference type="EMBL" id="BX842656">
    <property type="protein sequence ID" value="CAE81186.1"/>
    <property type="molecule type" value="Genomic_DNA"/>
</dbReference>
<dbReference type="RefSeq" id="WP_011166129.1">
    <property type="nucleotide sequence ID" value="NC_005363.1"/>
</dbReference>
<dbReference type="SMR" id="Q6MGU3"/>
<dbReference type="STRING" id="264462.Bd3828"/>
<dbReference type="GeneID" id="93014598"/>
<dbReference type="KEGG" id="bba:Bd3828"/>
<dbReference type="eggNOG" id="COG2265">
    <property type="taxonomic scope" value="Bacteria"/>
</dbReference>
<dbReference type="HOGENOM" id="CLU_014689_8_1_7"/>
<dbReference type="Proteomes" id="UP000008080">
    <property type="component" value="Chromosome"/>
</dbReference>
<dbReference type="GO" id="GO:0051539">
    <property type="term" value="F:4 iron, 4 sulfur cluster binding"/>
    <property type="evidence" value="ECO:0007669"/>
    <property type="project" value="UniProtKB-KW"/>
</dbReference>
<dbReference type="GO" id="GO:0046872">
    <property type="term" value="F:metal ion binding"/>
    <property type="evidence" value="ECO:0007669"/>
    <property type="project" value="UniProtKB-KW"/>
</dbReference>
<dbReference type="GO" id="GO:0070041">
    <property type="term" value="F:rRNA (uridine-C5-)-methyltransferase activity"/>
    <property type="evidence" value="ECO:0007669"/>
    <property type="project" value="TreeGrafter"/>
</dbReference>
<dbReference type="GO" id="GO:0070475">
    <property type="term" value="P:rRNA base methylation"/>
    <property type="evidence" value="ECO:0007669"/>
    <property type="project" value="TreeGrafter"/>
</dbReference>
<dbReference type="CDD" id="cd02440">
    <property type="entry name" value="AdoMet_MTases"/>
    <property type="match status" value="1"/>
</dbReference>
<dbReference type="FunFam" id="2.40.50.140:FF:000097">
    <property type="entry name" value="23S rRNA (uracil(1939)-C(5))-methyltransferase RlmD"/>
    <property type="match status" value="1"/>
</dbReference>
<dbReference type="Gene3D" id="2.40.50.140">
    <property type="entry name" value="Nucleic acid-binding proteins"/>
    <property type="match status" value="1"/>
</dbReference>
<dbReference type="Gene3D" id="3.40.50.150">
    <property type="entry name" value="Vaccinia Virus protein VP39"/>
    <property type="match status" value="2"/>
</dbReference>
<dbReference type="InterPro" id="IPR030390">
    <property type="entry name" value="MeTrfase_TrmA_AS"/>
</dbReference>
<dbReference type="InterPro" id="IPR012340">
    <property type="entry name" value="NA-bd_OB-fold"/>
</dbReference>
<dbReference type="InterPro" id="IPR029063">
    <property type="entry name" value="SAM-dependent_MTases_sf"/>
</dbReference>
<dbReference type="InterPro" id="IPR002792">
    <property type="entry name" value="TRAM_dom"/>
</dbReference>
<dbReference type="InterPro" id="IPR010280">
    <property type="entry name" value="U5_MeTrfase_fam"/>
</dbReference>
<dbReference type="PANTHER" id="PTHR11061">
    <property type="entry name" value="RNA M5U METHYLTRANSFERASE"/>
    <property type="match status" value="1"/>
</dbReference>
<dbReference type="PANTHER" id="PTHR11061:SF30">
    <property type="entry name" value="TRNA (URACIL(54)-C(5))-METHYLTRANSFERASE"/>
    <property type="match status" value="1"/>
</dbReference>
<dbReference type="Pfam" id="PF01938">
    <property type="entry name" value="TRAM"/>
    <property type="match status" value="1"/>
</dbReference>
<dbReference type="Pfam" id="PF05958">
    <property type="entry name" value="tRNA_U5-meth_tr"/>
    <property type="match status" value="1"/>
</dbReference>
<dbReference type="SUPFAM" id="SSF50249">
    <property type="entry name" value="Nucleic acid-binding proteins"/>
    <property type="match status" value="1"/>
</dbReference>
<dbReference type="SUPFAM" id="SSF53335">
    <property type="entry name" value="S-adenosyl-L-methionine-dependent methyltransferases"/>
    <property type="match status" value="1"/>
</dbReference>
<dbReference type="PROSITE" id="PS51687">
    <property type="entry name" value="SAM_MT_RNA_M5U"/>
    <property type="match status" value="1"/>
</dbReference>
<dbReference type="PROSITE" id="PS50926">
    <property type="entry name" value="TRAM"/>
    <property type="match status" value="1"/>
</dbReference>
<dbReference type="PROSITE" id="PS01230">
    <property type="entry name" value="TRMA_1"/>
    <property type="match status" value="1"/>
</dbReference>
<comment type="similarity">
    <text evidence="3">Belongs to the class I-like SAM-binding methyltransferase superfamily. RNA M5U methyltransferase family.</text>
</comment>
<proteinExistence type="inferred from homology"/>
<keyword id="KW-0004">4Fe-4S</keyword>
<keyword id="KW-0408">Iron</keyword>
<keyword id="KW-0411">Iron-sulfur</keyword>
<keyword id="KW-0479">Metal-binding</keyword>
<keyword id="KW-0489">Methyltransferase</keyword>
<keyword id="KW-1185">Reference proteome</keyword>
<keyword id="KW-0949">S-adenosyl-L-methionine</keyword>
<keyword id="KW-0808">Transferase</keyword>
<sequence>MSAKSNQRGAKAPLLGSKIKLNIEKLAIGGAGVARHEGMVVFVPQAAPNEEILAEITLVKKNFMEARVVEILTASPHRREPPCPVAHTCGGCNWQHITEEEQRRQKHTLVLETIKKFNRDLEFNYLPIQPSPRVLRYRNRIQPKFKNGRFGFFARNSHQIVETMDCLITEETLTDKFAEVKAWAEKKNAKDLQRLEMYIAEEGDVRYGLITDEDDGIGFSQVNRFQNEDLLRTALDWAGDGPYKKVYDLYAGAGNFTFPLAAKYAGSEIIGVELNPKLVERARSKITDKRMTYFMSDVETYMRRASIGKDDLVVLDPPRAGASEYTMQTLAAAQPRKIIYISCHPVSLARDLNWFFAQTQKLGIKYKLDRVQTFEMFPQTDHVETIAELRVDS</sequence>
<feature type="chain" id="PRO_0000161957" description="Uncharacterized RNA methyltransferase Bd3828">
    <location>
        <begin position="1"/>
        <end position="393"/>
    </location>
</feature>
<feature type="domain" description="TRAM" evidence="2">
    <location>
        <begin position="12"/>
        <end position="70"/>
    </location>
</feature>
<feature type="active site" description="Nucleophile" evidence="3">
    <location>
        <position position="343"/>
    </location>
</feature>
<feature type="binding site" evidence="1">
    <location>
        <position position="83"/>
    </location>
    <ligand>
        <name>[4Fe-4S] cluster</name>
        <dbReference type="ChEBI" id="CHEBI:49883"/>
    </ligand>
</feature>
<feature type="binding site" evidence="1">
    <location>
        <position position="89"/>
    </location>
    <ligand>
        <name>[4Fe-4S] cluster</name>
        <dbReference type="ChEBI" id="CHEBI:49883"/>
    </ligand>
</feature>
<feature type="binding site" evidence="1">
    <location>
        <position position="92"/>
    </location>
    <ligand>
        <name>[4Fe-4S] cluster</name>
        <dbReference type="ChEBI" id="CHEBI:49883"/>
    </ligand>
</feature>
<feature type="binding site" evidence="1">
    <location>
        <position position="166"/>
    </location>
    <ligand>
        <name>[4Fe-4S] cluster</name>
        <dbReference type="ChEBI" id="CHEBI:49883"/>
    </ligand>
</feature>
<feature type="binding site" evidence="3">
    <location>
        <position position="221"/>
    </location>
    <ligand>
        <name>S-adenosyl-L-methionine</name>
        <dbReference type="ChEBI" id="CHEBI:59789"/>
    </ligand>
</feature>
<feature type="binding site" evidence="3">
    <location>
        <position position="250"/>
    </location>
    <ligand>
        <name>S-adenosyl-L-methionine</name>
        <dbReference type="ChEBI" id="CHEBI:59789"/>
    </ligand>
</feature>
<feature type="binding site" evidence="3">
    <location>
        <position position="273"/>
    </location>
    <ligand>
        <name>S-adenosyl-L-methionine</name>
        <dbReference type="ChEBI" id="CHEBI:59789"/>
    </ligand>
</feature>
<feature type="binding site" evidence="3">
    <location>
        <position position="316"/>
    </location>
    <ligand>
        <name>S-adenosyl-L-methionine</name>
        <dbReference type="ChEBI" id="CHEBI:59789"/>
    </ligand>
</feature>
<organism>
    <name type="scientific">Bdellovibrio bacteriovorus (strain ATCC 15356 / DSM 50701 / NCIMB 9529 / HD100)</name>
    <dbReference type="NCBI Taxonomy" id="264462"/>
    <lineage>
        <taxon>Bacteria</taxon>
        <taxon>Pseudomonadati</taxon>
        <taxon>Bdellovibrionota</taxon>
        <taxon>Bdellovibrionia</taxon>
        <taxon>Bdellovibrionales</taxon>
        <taxon>Pseudobdellovibrionaceae</taxon>
        <taxon>Bdellovibrio</taxon>
    </lineage>
</organism>
<protein>
    <recommendedName>
        <fullName>Uncharacterized RNA methyltransferase Bd3828</fullName>
        <ecNumber>2.1.1.-</ecNumber>
    </recommendedName>
</protein>
<reference key="1">
    <citation type="journal article" date="2004" name="Science">
        <title>A predator unmasked: life cycle of Bdellovibrio bacteriovorus from a genomic perspective.</title>
        <authorList>
            <person name="Rendulic S."/>
            <person name="Jagtap P."/>
            <person name="Rosinus A."/>
            <person name="Eppinger M."/>
            <person name="Baar C."/>
            <person name="Lanz C."/>
            <person name="Keller H."/>
            <person name="Lambert C."/>
            <person name="Evans K.J."/>
            <person name="Goesmann A."/>
            <person name="Meyer F."/>
            <person name="Sockett R.E."/>
            <person name="Schuster S.C."/>
        </authorList>
    </citation>
    <scope>NUCLEOTIDE SEQUENCE [LARGE SCALE GENOMIC DNA]</scope>
    <source>
        <strain>ATCC 15356 / DSM 50701 / NCIMB 9529 / HD100</strain>
    </source>
</reference>